<reference key="1">
    <citation type="journal article" date="2013" name="ISME J.">
        <title>A small predatory core genome in the divergent marine Bacteriovorax marinus SJ and the terrestrial Bdellovibrio bacteriovorus.</title>
        <authorList>
            <person name="Crossman L.C."/>
            <person name="Chen H."/>
            <person name="Cerdeno-Tarraga A.M."/>
            <person name="Brooks K."/>
            <person name="Quail M.A."/>
            <person name="Pineiro S.A."/>
            <person name="Hobley L."/>
            <person name="Sockett R.E."/>
            <person name="Bentley S.D."/>
            <person name="Parkhill J."/>
            <person name="Williams H.N."/>
            <person name="Stine O.C."/>
        </authorList>
    </citation>
    <scope>NUCLEOTIDE SEQUENCE [LARGE SCALE GENOMIC DNA]</scope>
    <source>
        <strain>ATCC BAA-682 / DSM 15412 / SJ</strain>
    </source>
</reference>
<sequence length="1226" mass="140303">MKLKRLVIQGFKSFKDRTTIHFDDGITGIVGPNGCGKSNIVDALFWVMGEQSAKHLRGKSMKDLIFAGSSKYNPGAYAEATLVLGNDDGKHIHIGNKVSSPSEIQLTRKLYRNGETEYRINNYPARLKDIQEVFMDTGAGAKSYSIIAQGEINRLVQAKPEERRTMIEEVAGITKFKVRKKESLKKIEQTEQNLNRLQDLQSEIEKNLKALQKQAEKAERARSLKEKIKRNDIIVHAHKVYDLLKDLRDGKTLLNEKTLELEGWGTRKNSLEISLEEERFKKEEQTEKLEILQKERNEISTQLATAEERFSNLCKTLTDKENLIETRQKEMTELEEELVEREEKIKALEDSLVELQTRNEETVNFEEVEEKIELLKERLELKTDQVDTLKEEIELKKSELNTLSQAAFQNTSKLEEYAANLQDITEEIEALEKQYSGVSTQIADERDAVHTAQELSEKLTEVESELKSEIEELISANKELDAKLKEKSKSLITKESKLSSLQEIAAAMDGVREGAVEFLETVDSDKYQLLGNLIQCEEDHAKAVQNLLSDFMDTLVSTDEDVSAVIEWCKTNNDKALEFLAPNKNGDITSEETLERLRVATGGDITPVHELLNLPEEYKSKLIPFFDGYFIASKFDQEVFKSISDSIRFKAISSTDGKLLVKNPGNGKILTMSGSSEGQGVVERNNQIQELEKEIEVLRVEVAELETNSGEKSLVLEQKRDSLEEQRNLLSEARADHAAKKSALESKLSGMESGNTRLEILKKRKQEISKSRLDMLESEDSLSKNKSSLDEELEELSTRFEEENAELADLKSTYETEREAYMEKQVEINTFKERVSGIQSQIEDINSQMDKQTARIASNKELIEKYNEEIETTNDQIDTLESSNQEMASELSERDDVLGIMKDDLTQLLLAMQEREDEVKELSKKIAKNEKDITEYELKINQWQNDEVEVVKNIFEKYQIDLREAIGGFLEYDQDDFDDLIDTRQMHFMETENGLVTIEKQSYEFHRRYGQDLKECSNKLKNYKNEYNRLGEINWQAIEDYDRQKLRFDFLRVQEVELKQSLEDLETAINHIDEKSKERFKIAFEEVDVRFRKVFPIIFGGGEAMLKVTGDINDSECGVDIIAKPPGKKMQNINLMSGGEKAMTAVSLIFSIFLVKPSPFCLLDEVDAPLDDANVGRFNELLREMSSDSQFILITHNKKTMELNDTLYGVTMQEPGVSKAVSVQLH</sequence>
<comment type="function">
    <text evidence="1">Required for chromosome condensation and partitioning.</text>
</comment>
<comment type="subunit">
    <text evidence="1">Homodimer.</text>
</comment>
<comment type="subcellular location">
    <subcellularLocation>
        <location evidence="1">Cytoplasm</location>
    </subcellularLocation>
</comment>
<comment type="domain">
    <text evidence="1">Contains large globular domains required for ATP hydrolysis at each terminus and a third globular domain forming a flexible SMC hinge near the middle of the molecule. These domains are separated by coiled-coil structures.</text>
</comment>
<comment type="similarity">
    <text evidence="1">Belongs to the SMC family.</text>
</comment>
<comment type="sequence caution" evidence="2">
    <conflict type="erroneous initiation">
        <sequence resource="EMBL-CDS" id="CBW27958"/>
    </conflict>
    <text>Extended N-terminus.</text>
</comment>
<evidence type="ECO:0000255" key="1">
    <source>
        <dbReference type="HAMAP-Rule" id="MF_01894"/>
    </source>
</evidence>
<evidence type="ECO:0000305" key="2"/>
<feature type="chain" id="PRO_0000409263" description="Chromosome partition protein Smc">
    <location>
        <begin position="1"/>
        <end position="1226"/>
    </location>
</feature>
<feature type="domain" description="SMC hinge">
    <location>
        <begin position="527"/>
        <end position="635"/>
    </location>
</feature>
<feature type="coiled-coil region" evidence="1">
    <location>
        <begin position="173"/>
        <end position="231"/>
    </location>
</feature>
<feature type="coiled-coil region" evidence="1">
    <location>
        <begin position="269"/>
        <end position="491"/>
    </location>
</feature>
<feature type="coiled-coil region" evidence="1">
    <location>
        <begin position="679"/>
        <end position="741"/>
    </location>
</feature>
<feature type="coiled-coil region" evidence="1">
    <location>
        <begin position="775"/>
        <end position="965"/>
    </location>
</feature>
<feature type="coiled-coil region" evidence="1">
    <location>
        <begin position="1006"/>
        <end position="1078"/>
    </location>
</feature>
<feature type="binding site" evidence="1">
    <location>
        <begin position="32"/>
        <end position="39"/>
    </location>
    <ligand>
        <name>ATP</name>
        <dbReference type="ChEBI" id="CHEBI:30616"/>
    </ligand>
</feature>
<dbReference type="EMBL" id="FQ312005">
    <property type="protein sequence ID" value="CBW27958.1"/>
    <property type="status" value="ALT_INIT"/>
    <property type="molecule type" value="Genomic_DNA"/>
</dbReference>
<dbReference type="RefSeq" id="WP_044557708.1">
    <property type="nucleotide sequence ID" value="NC_016620.1"/>
</dbReference>
<dbReference type="SMR" id="E1X022"/>
<dbReference type="STRING" id="862908.BMS_3207"/>
<dbReference type="KEGG" id="bmx:BMS_3207"/>
<dbReference type="PATRIC" id="fig|862908.3.peg.3064"/>
<dbReference type="eggNOG" id="COG1196">
    <property type="taxonomic scope" value="Bacteria"/>
</dbReference>
<dbReference type="HOGENOM" id="CLU_001042_2_2_7"/>
<dbReference type="OrthoDB" id="5287050at2"/>
<dbReference type="Proteomes" id="UP000008963">
    <property type="component" value="Chromosome"/>
</dbReference>
<dbReference type="GO" id="GO:0005694">
    <property type="term" value="C:chromosome"/>
    <property type="evidence" value="ECO:0007669"/>
    <property type="project" value="InterPro"/>
</dbReference>
<dbReference type="GO" id="GO:0005737">
    <property type="term" value="C:cytoplasm"/>
    <property type="evidence" value="ECO:0007669"/>
    <property type="project" value="UniProtKB-SubCell"/>
</dbReference>
<dbReference type="GO" id="GO:0005524">
    <property type="term" value="F:ATP binding"/>
    <property type="evidence" value="ECO:0007669"/>
    <property type="project" value="UniProtKB-UniRule"/>
</dbReference>
<dbReference type="GO" id="GO:0016887">
    <property type="term" value="F:ATP hydrolysis activity"/>
    <property type="evidence" value="ECO:0007669"/>
    <property type="project" value="InterPro"/>
</dbReference>
<dbReference type="GO" id="GO:0003677">
    <property type="term" value="F:DNA binding"/>
    <property type="evidence" value="ECO:0007669"/>
    <property type="project" value="UniProtKB-UniRule"/>
</dbReference>
<dbReference type="GO" id="GO:0030261">
    <property type="term" value="P:chromosome condensation"/>
    <property type="evidence" value="ECO:0007669"/>
    <property type="project" value="InterPro"/>
</dbReference>
<dbReference type="GO" id="GO:0007059">
    <property type="term" value="P:chromosome segregation"/>
    <property type="evidence" value="ECO:0007669"/>
    <property type="project" value="UniProtKB-UniRule"/>
</dbReference>
<dbReference type="GO" id="GO:0006260">
    <property type="term" value="P:DNA replication"/>
    <property type="evidence" value="ECO:0007669"/>
    <property type="project" value="UniProtKB-UniRule"/>
</dbReference>
<dbReference type="GO" id="GO:0007062">
    <property type="term" value="P:sister chromatid cohesion"/>
    <property type="evidence" value="ECO:0007669"/>
    <property type="project" value="InterPro"/>
</dbReference>
<dbReference type="CDD" id="cd03278">
    <property type="entry name" value="ABC_SMC_barmotin"/>
    <property type="match status" value="1"/>
</dbReference>
<dbReference type="Gene3D" id="1.10.287.1490">
    <property type="match status" value="1"/>
</dbReference>
<dbReference type="Gene3D" id="3.40.50.300">
    <property type="entry name" value="P-loop containing nucleotide triphosphate hydrolases"/>
    <property type="match status" value="2"/>
</dbReference>
<dbReference type="HAMAP" id="MF_01894">
    <property type="entry name" value="Smc_prok"/>
    <property type="match status" value="1"/>
</dbReference>
<dbReference type="InterPro" id="IPR027417">
    <property type="entry name" value="P-loop_NTPase"/>
</dbReference>
<dbReference type="InterPro" id="IPR003395">
    <property type="entry name" value="RecF/RecN/SMC_N"/>
</dbReference>
<dbReference type="InterPro" id="IPR024704">
    <property type="entry name" value="SMC"/>
</dbReference>
<dbReference type="InterPro" id="IPR010935">
    <property type="entry name" value="SMC_hinge"/>
</dbReference>
<dbReference type="InterPro" id="IPR036277">
    <property type="entry name" value="SMC_hinge_sf"/>
</dbReference>
<dbReference type="InterPro" id="IPR011890">
    <property type="entry name" value="SMC_prok"/>
</dbReference>
<dbReference type="NCBIfam" id="TIGR02168">
    <property type="entry name" value="SMC_prok_B"/>
    <property type="match status" value="1"/>
</dbReference>
<dbReference type="PANTHER" id="PTHR43977">
    <property type="entry name" value="STRUCTURAL MAINTENANCE OF CHROMOSOMES PROTEIN 3"/>
    <property type="match status" value="1"/>
</dbReference>
<dbReference type="Pfam" id="PF06470">
    <property type="entry name" value="SMC_hinge"/>
    <property type="match status" value="1"/>
</dbReference>
<dbReference type="Pfam" id="PF02463">
    <property type="entry name" value="SMC_N"/>
    <property type="match status" value="1"/>
</dbReference>
<dbReference type="PIRSF" id="PIRSF005719">
    <property type="entry name" value="SMC"/>
    <property type="match status" value="1"/>
</dbReference>
<dbReference type="SUPFAM" id="SSF52540">
    <property type="entry name" value="P-loop containing nucleoside triphosphate hydrolases"/>
    <property type="match status" value="1"/>
</dbReference>
<dbReference type="SUPFAM" id="SSF75553">
    <property type="entry name" value="Smc hinge domain"/>
    <property type="match status" value="1"/>
</dbReference>
<protein>
    <recommendedName>
        <fullName evidence="1">Chromosome partition protein Smc</fullName>
    </recommendedName>
</protein>
<gene>
    <name evidence="1" type="primary">smc</name>
    <name type="ordered locus">BMS_3207</name>
</gene>
<organism>
    <name type="scientific">Halobacteriovorax marinus (strain ATCC BAA-682 / DSM 15412 / SJ)</name>
    <name type="common">Bacteriovorax marinus</name>
    <dbReference type="NCBI Taxonomy" id="862908"/>
    <lineage>
        <taxon>Bacteria</taxon>
        <taxon>Pseudomonadati</taxon>
        <taxon>Bdellovibrionota</taxon>
        <taxon>Bacteriovoracia</taxon>
        <taxon>Bacteriovoracales</taxon>
        <taxon>Halobacteriovoraceae</taxon>
        <taxon>Halobacteriovorax</taxon>
    </lineage>
</organism>
<keyword id="KW-0067">ATP-binding</keyword>
<keyword id="KW-0175">Coiled coil</keyword>
<keyword id="KW-0963">Cytoplasm</keyword>
<keyword id="KW-0238">DNA-binding</keyword>
<keyword id="KW-0547">Nucleotide-binding</keyword>
<keyword id="KW-1185">Reference proteome</keyword>
<proteinExistence type="inferred from homology"/>
<accession>E1X022</accession>
<name>SMC_HALMS</name>